<accession>Q54F10</accession>
<protein>
    <recommendedName>
        <fullName>NADH dehydrogenase [ubiquinone] flavoprotein 2, mitochondrial</fullName>
        <ecNumber>7.1.1.2</ecNumber>
    </recommendedName>
</protein>
<proteinExistence type="inferred from homology"/>
<feature type="transit peptide" description="Mitochondrion" evidence="2">
    <location>
        <begin position="1"/>
        <end position="40"/>
    </location>
</feature>
<feature type="chain" id="PRO_0000328010" description="NADH dehydrogenase [ubiquinone] flavoprotein 2, mitochondrial">
    <location>
        <begin position="41"/>
        <end position="247"/>
    </location>
</feature>
<feature type="region of interest" description="Disordered" evidence="3">
    <location>
        <begin position="211"/>
        <end position="247"/>
    </location>
</feature>
<feature type="binding site" evidence="2">
    <location>
        <position position="135"/>
    </location>
    <ligand>
        <name>[2Fe-2S] cluster</name>
        <dbReference type="ChEBI" id="CHEBI:190135"/>
    </ligand>
</feature>
<feature type="binding site" evidence="2">
    <location>
        <position position="140"/>
    </location>
    <ligand>
        <name>[2Fe-2S] cluster</name>
        <dbReference type="ChEBI" id="CHEBI:190135"/>
    </ligand>
</feature>
<feature type="binding site" evidence="2">
    <location>
        <position position="176"/>
    </location>
    <ligand>
        <name>[2Fe-2S] cluster</name>
        <dbReference type="ChEBI" id="CHEBI:190135"/>
    </ligand>
</feature>
<feature type="binding site" evidence="2">
    <location>
        <position position="180"/>
    </location>
    <ligand>
        <name>[2Fe-2S] cluster</name>
        <dbReference type="ChEBI" id="CHEBI:190135"/>
    </ligand>
</feature>
<keyword id="KW-0001">2Fe-2S</keyword>
<keyword id="KW-0249">Electron transport</keyword>
<keyword id="KW-0408">Iron</keyword>
<keyword id="KW-0411">Iron-sulfur</keyword>
<keyword id="KW-0472">Membrane</keyword>
<keyword id="KW-0479">Metal-binding</keyword>
<keyword id="KW-0496">Mitochondrion</keyword>
<keyword id="KW-0999">Mitochondrion inner membrane</keyword>
<keyword id="KW-0520">NAD</keyword>
<keyword id="KW-0560">Oxidoreductase</keyword>
<keyword id="KW-1185">Reference proteome</keyword>
<keyword id="KW-0679">Respiratory chain</keyword>
<keyword id="KW-0809">Transit peptide</keyword>
<keyword id="KW-1278">Translocase</keyword>
<keyword id="KW-0813">Transport</keyword>
<keyword id="KW-0830">Ubiquinone</keyword>
<name>NDUV2_DICDI</name>
<reference key="1">
    <citation type="journal article" date="2005" name="Nature">
        <title>The genome of the social amoeba Dictyostelium discoideum.</title>
        <authorList>
            <person name="Eichinger L."/>
            <person name="Pachebat J.A."/>
            <person name="Gloeckner G."/>
            <person name="Rajandream M.A."/>
            <person name="Sucgang R."/>
            <person name="Berriman M."/>
            <person name="Song J."/>
            <person name="Olsen R."/>
            <person name="Szafranski K."/>
            <person name="Xu Q."/>
            <person name="Tunggal B."/>
            <person name="Kummerfeld S."/>
            <person name="Madera M."/>
            <person name="Konfortov B.A."/>
            <person name="Rivero F."/>
            <person name="Bankier A.T."/>
            <person name="Lehmann R."/>
            <person name="Hamlin N."/>
            <person name="Davies R."/>
            <person name="Gaudet P."/>
            <person name="Fey P."/>
            <person name="Pilcher K."/>
            <person name="Chen G."/>
            <person name="Saunders D."/>
            <person name="Sodergren E.J."/>
            <person name="Davis P."/>
            <person name="Kerhornou A."/>
            <person name="Nie X."/>
            <person name="Hall N."/>
            <person name="Anjard C."/>
            <person name="Hemphill L."/>
            <person name="Bason N."/>
            <person name="Farbrother P."/>
            <person name="Desany B."/>
            <person name="Just E."/>
            <person name="Morio T."/>
            <person name="Rost R."/>
            <person name="Churcher C.M."/>
            <person name="Cooper J."/>
            <person name="Haydock S."/>
            <person name="van Driessche N."/>
            <person name="Cronin A."/>
            <person name="Goodhead I."/>
            <person name="Muzny D.M."/>
            <person name="Mourier T."/>
            <person name="Pain A."/>
            <person name="Lu M."/>
            <person name="Harper D."/>
            <person name="Lindsay R."/>
            <person name="Hauser H."/>
            <person name="James K.D."/>
            <person name="Quiles M."/>
            <person name="Madan Babu M."/>
            <person name="Saito T."/>
            <person name="Buchrieser C."/>
            <person name="Wardroper A."/>
            <person name="Felder M."/>
            <person name="Thangavelu M."/>
            <person name="Johnson D."/>
            <person name="Knights A."/>
            <person name="Loulseged H."/>
            <person name="Mungall K.L."/>
            <person name="Oliver K."/>
            <person name="Price C."/>
            <person name="Quail M.A."/>
            <person name="Urushihara H."/>
            <person name="Hernandez J."/>
            <person name="Rabbinowitsch E."/>
            <person name="Steffen D."/>
            <person name="Sanders M."/>
            <person name="Ma J."/>
            <person name="Kohara Y."/>
            <person name="Sharp S."/>
            <person name="Simmonds M.N."/>
            <person name="Spiegler S."/>
            <person name="Tivey A."/>
            <person name="Sugano S."/>
            <person name="White B."/>
            <person name="Walker D."/>
            <person name="Woodward J.R."/>
            <person name="Winckler T."/>
            <person name="Tanaka Y."/>
            <person name="Shaulsky G."/>
            <person name="Schleicher M."/>
            <person name="Weinstock G.M."/>
            <person name="Rosenthal A."/>
            <person name="Cox E.C."/>
            <person name="Chisholm R.L."/>
            <person name="Gibbs R.A."/>
            <person name="Loomis W.F."/>
            <person name="Platzer M."/>
            <person name="Kay R.R."/>
            <person name="Williams J.G."/>
            <person name="Dear P.H."/>
            <person name="Noegel A.A."/>
            <person name="Barrell B.G."/>
            <person name="Kuspa A."/>
        </authorList>
    </citation>
    <scope>NUCLEOTIDE SEQUENCE [LARGE SCALE GENOMIC DNA]</scope>
    <source>
        <strain>AX4</strain>
    </source>
</reference>
<gene>
    <name type="primary">ndufv2</name>
    <name type="ORF">DDB_G0291173</name>
</gene>
<evidence type="ECO:0000250" key="1"/>
<evidence type="ECO:0000255" key="2"/>
<evidence type="ECO:0000256" key="3">
    <source>
        <dbReference type="SAM" id="MobiDB-lite"/>
    </source>
</evidence>
<evidence type="ECO:0000305" key="4"/>
<dbReference type="EC" id="7.1.1.2"/>
<dbReference type="EMBL" id="AAFI02000175">
    <property type="protein sequence ID" value="EAL61870.1"/>
    <property type="molecule type" value="Genomic_DNA"/>
</dbReference>
<dbReference type="RefSeq" id="XP_635380.1">
    <property type="nucleotide sequence ID" value="XM_630288.1"/>
</dbReference>
<dbReference type="SMR" id="Q54F10"/>
<dbReference type="FunCoup" id="Q54F10">
    <property type="interactions" value="386"/>
</dbReference>
<dbReference type="STRING" id="44689.Q54F10"/>
<dbReference type="GlyGen" id="Q54F10">
    <property type="glycosylation" value="1 site"/>
</dbReference>
<dbReference type="PaxDb" id="44689-DDB0233206"/>
<dbReference type="EnsemblProtists" id="EAL61870">
    <property type="protein sequence ID" value="EAL61870"/>
    <property type="gene ID" value="DDB_G0291173"/>
</dbReference>
<dbReference type="GeneID" id="8628028"/>
<dbReference type="KEGG" id="ddi:DDB_G0291173"/>
<dbReference type="dictyBase" id="DDB_G0291173">
    <property type="gene designation" value="ndufv2"/>
</dbReference>
<dbReference type="VEuPathDB" id="AmoebaDB:DDB_G0291173"/>
<dbReference type="eggNOG" id="KOG3196">
    <property type="taxonomic scope" value="Eukaryota"/>
</dbReference>
<dbReference type="HOGENOM" id="CLU_054362_1_0_1"/>
<dbReference type="InParanoid" id="Q54F10"/>
<dbReference type="OMA" id="ERTMHYL"/>
<dbReference type="PhylomeDB" id="Q54F10"/>
<dbReference type="Reactome" id="R-DDI-6799198">
    <property type="pathway name" value="Complex I biogenesis"/>
</dbReference>
<dbReference type="PRO" id="PR:Q54F10"/>
<dbReference type="Proteomes" id="UP000002195">
    <property type="component" value="Chromosome 5"/>
</dbReference>
<dbReference type="GO" id="GO:0005743">
    <property type="term" value="C:mitochondrial inner membrane"/>
    <property type="evidence" value="ECO:0007669"/>
    <property type="project" value="UniProtKB-SubCell"/>
</dbReference>
<dbReference type="GO" id="GO:0045271">
    <property type="term" value="C:respiratory chain complex I"/>
    <property type="evidence" value="ECO:0000318"/>
    <property type="project" value="GO_Central"/>
</dbReference>
<dbReference type="GO" id="GO:0051537">
    <property type="term" value="F:2 iron, 2 sulfur cluster binding"/>
    <property type="evidence" value="ECO:0007669"/>
    <property type="project" value="UniProtKB-KW"/>
</dbReference>
<dbReference type="GO" id="GO:0046872">
    <property type="term" value="F:metal ion binding"/>
    <property type="evidence" value="ECO:0007669"/>
    <property type="project" value="UniProtKB-KW"/>
</dbReference>
<dbReference type="GO" id="GO:0008137">
    <property type="term" value="F:NADH dehydrogenase (ubiquinone) activity"/>
    <property type="evidence" value="ECO:0007669"/>
    <property type="project" value="UniProtKB-EC"/>
</dbReference>
<dbReference type="GO" id="GO:0006120">
    <property type="term" value="P:mitochondrial electron transport, NADH to ubiquinone"/>
    <property type="evidence" value="ECO:0000318"/>
    <property type="project" value="GO_Central"/>
</dbReference>
<dbReference type="CDD" id="cd03064">
    <property type="entry name" value="TRX_Fd_NuoE"/>
    <property type="match status" value="1"/>
</dbReference>
<dbReference type="FunFam" id="3.40.30.10:FF:000022">
    <property type="entry name" value="NADH dehydrogenase flavoprotein 2, mitochondrial"/>
    <property type="match status" value="1"/>
</dbReference>
<dbReference type="FunFam" id="1.10.10.1590:FF:000001">
    <property type="entry name" value="NADH-quinone oxidoreductase subunit E"/>
    <property type="match status" value="1"/>
</dbReference>
<dbReference type="Gene3D" id="3.40.30.10">
    <property type="entry name" value="Glutaredoxin"/>
    <property type="match status" value="1"/>
</dbReference>
<dbReference type="Gene3D" id="1.10.10.1590">
    <property type="entry name" value="NADH-quinone oxidoreductase subunit E"/>
    <property type="match status" value="1"/>
</dbReference>
<dbReference type="InterPro" id="IPR002023">
    <property type="entry name" value="NuoE-like"/>
</dbReference>
<dbReference type="InterPro" id="IPR042128">
    <property type="entry name" value="NuoE_dom"/>
</dbReference>
<dbReference type="InterPro" id="IPR041921">
    <property type="entry name" value="NuoE_N"/>
</dbReference>
<dbReference type="InterPro" id="IPR036249">
    <property type="entry name" value="Thioredoxin-like_sf"/>
</dbReference>
<dbReference type="NCBIfam" id="TIGR01958">
    <property type="entry name" value="nuoE_fam"/>
    <property type="match status" value="1"/>
</dbReference>
<dbReference type="NCBIfam" id="NF005725">
    <property type="entry name" value="PRK07539.1-5"/>
    <property type="match status" value="1"/>
</dbReference>
<dbReference type="PANTHER" id="PTHR10371:SF3">
    <property type="entry name" value="NADH DEHYDROGENASE [UBIQUINONE] FLAVOPROTEIN 2, MITOCHONDRIAL"/>
    <property type="match status" value="1"/>
</dbReference>
<dbReference type="PANTHER" id="PTHR10371">
    <property type="entry name" value="NADH DEHYDROGENASE UBIQUINONE FLAVOPROTEIN 2, MITOCHONDRIAL"/>
    <property type="match status" value="1"/>
</dbReference>
<dbReference type="Pfam" id="PF01257">
    <property type="entry name" value="2Fe-2S_thioredx"/>
    <property type="match status" value="1"/>
</dbReference>
<dbReference type="PIRSF" id="PIRSF000216">
    <property type="entry name" value="NADH_DH_24kDa"/>
    <property type="match status" value="1"/>
</dbReference>
<dbReference type="SUPFAM" id="SSF52833">
    <property type="entry name" value="Thioredoxin-like"/>
    <property type="match status" value="1"/>
</dbReference>
<dbReference type="PROSITE" id="PS01099">
    <property type="entry name" value="COMPLEX1_24K"/>
    <property type="match status" value="1"/>
</dbReference>
<comment type="function">
    <text evidence="1">Core subunit of the mitochondrial membrane respiratory chain NADH dehydrogenase (Complex I) that is believed to belong to the minimal assembly required for catalysis. Complex I functions in the transfer of electrons from NADH to the respiratory chain. The immediate electron acceptor for the enzyme is believed to be ubiquinone (By similarity).</text>
</comment>
<comment type="catalytic activity">
    <reaction>
        <text>a ubiquinone + NADH + 5 H(+)(in) = a ubiquinol + NAD(+) + 4 H(+)(out)</text>
        <dbReference type="Rhea" id="RHEA:29091"/>
        <dbReference type="Rhea" id="RHEA-COMP:9565"/>
        <dbReference type="Rhea" id="RHEA-COMP:9566"/>
        <dbReference type="ChEBI" id="CHEBI:15378"/>
        <dbReference type="ChEBI" id="CHEBI:16389"/>
        <dbReference type="ChEBI" id="CHEBI:17976"/>
        <dbReference type="ChEBI" id="CHEBI:57540"/>
        <dbReference type="ChEBI" id="CHEBI:57945"/>
        <dbReference type="EC" id="7.1.1.2"/>
    </reaction>
</comment>
<comment type="cofactor">
    <cofactor evidence="4">
        <name>[2Fe-2S] cluster</name>
        <dbReference type="ChEBI" id="CHEBI:190135"/>
    </cofactor>
    <text evidence="4">Binds 1 [2Fe-2S] cluster.</text>
</comment>
<comment type="subunit">
    <text evidence="1">Complex I is composed of 45 different subunits. This is a component of the flavoprotein-sulfur (FP) fragment of the enzyme (By similarity).</text>
</comment>
<comment type="subcellular location">
    <subcellularLocation>
        <location evidence="1">Mitochondrion inner membrane</location>
    </subcellularLocation>
</comment>
<comment type="similarity">
    <text evidence="4">Belongs to the complex I 24 kDa subunit family.</text>
</comment>
<sequence>MFRSLLKRTTFLNQLNKSNGFNRNYFKQSTLTRSDALSRHVETEDNNEHTPFDFTQENLVKVEKILAKYPKQYRQSALIPLLDLAQRQNGGWISLRAMDKVAHICGIAPMTAYEVASFYTMFNRTKIGENFVQVCTTTPCMLRGSGEIIKTCKSHLGIQVGETTPDNKFTLVEVECLGACVNAPMMCINDDFYEDLTSASTINLLDQIKNNKPTKIGPQTHRKAAEGPQGKTTLLEPPVGPTCRDDL</sequence>
<organism>
    <name type="scientific">Dictyostelium discoideum</name>
    <name type="common">Social amoeba</name>
    <dbReference type="NCBI Taxonomy" id="44689"/>
    <lineage>
        <taxon>Eukaryota</taxon>
        <taxon>Amoebozoa</taxon>
        <taxon>Evosea</taxon>
        <taxon>Eumycetozoa</taxon>
        <taxon>Dictyostelia</taxon>
        <taxon>Dictyosteliales</taxon>
        <taxon>Dictyosteliaceae</taxon>
        <taxon>Dictyostelium</taxon>
    </lineage>
</organism>